<dbReference type="EC" id="4.2.1.9" evidence="1"/>
<dbReference type="EMBL" id="CP000016">
    <property type="protein sequence ID" value="AAZ41212.1"/>
    <property type="molecule type" value="Genomic_DNA"/>
</dbReference>
<dbReference type="RefSeq" id="WP_011283123.1">
    <property type="nucleotide sequence ID" value="NC_007292.1"/>
</dbReference>
<dbReference type="SMR" id="Q491Z0"/>
<dbReference type="STRING" id="291272.BPEN_611"/>
<dbReference type="KEGG" id="bpn:BPEN_611"/>
<dbReference type="eggNOG" id="COG0129">
    <property type="taxonomic scope" value="Bacteria"/>
</dbReference>
<dbReference type="HOGENOM" id="CLU_014271_4_2_6"/>
<dbReference type="OrthoDB" id="9807077at2"/>
<dbReference type="UniPathway" id="UPA00047">
    <property type="reaction ID" value="UER00057"/>
</dbReference>
<dbReference type="UniPathway" id="UPA00049">
    <property type="reaction ID" value="UER00061"/>
</dbReference>
<dbReference type="Proteomes" id="UP000007794">
    <property type="component" value="Chromosome"/>
</dbReference>
<dbReference type="GO" id="GO:0005829">
    <property type="term" value="C:cytosol"/>
    <property type="evidence" value="ECO:0007669"/>
    <property type="project" value="TreeGrafter"/>
</dbReference>
<dbReference type="GO" id="GO:0051537">
    <property type="term" value="F:2 iron, 2 sulfur cluster binding"/>
    <property type="evidence" value="ECO:0007669"/>
    <property type="project" value="UniProtKB-UniRule"/>
</dbReference>
<dbReference type="GO" id="GO:0004160">
    <property type="term" value="F:dihydroxy-acid dehydratase activity"/>
    <property type="evidence" value="ECO:0007669"/>
    <property type="project" value="UniProtKB-UniRule"/>
</dbReference>
<dbReference type="GO" id="GO:0000287">
    <property type="term" value="F:magnesium ion binding"/>
    <property type="evidence" value="ECO:0007669"/>
    <property type="project" value="UniProtKB-UniRule"/>
</dbReference>
<dbReference type="GO" id="GO:0009097">
    <property type="term" value="P:isoleucine biosynthetic process"/>
    <property type="evidence" value="ECO:0007669"/>
    <property type="project" value="UniProtKB-UniRule"/>
</dbReference>
<dbReference type="GO" id="GO:0009099">
    <property type="term" value="P:L-valine biosynthetic process"/>
    <property type="evidence" value="ECO:0007669"/>
    <property type="project" value="UniProtKB-UniRule"/>
</dbReference>
<dbReference type="FunFam" id="3.50.30.80:FF:000001">
    <property type="entry name" value="Dihydroxy-acid dehydratase"/>
    <property type="match status" value="1"/>
</dbReference>
<dbReference type="Gene3D" id="3.50.30.80">
    <property type="entry name" value="IlvD/EDD C-terminal domain-like"/>
    <property type="match status" value="1"/>
</dbReference>
<dbReference type="HAMAP" id="MF_00012">
    <property type="entry name" value="IlvD"/>
    <property type="match status" value="1"/>
</dbReference>
<dbReference type="InterPro" id="IPR042096">
    <property type="entry name" value="Dihydro-acid_dehy_C"/>
</dbReference>
<dbReference type="InterPro" id="IPR004404">
    <property type="entry name" value="DihydroxyA_deHydtase"/>
</dbReference>
<dbReference type="InterPro" id="IPR020558">
    <property type="entry name" value="DiOHA_6PGluconate_deHydtase_CS"/>
</dbReference>
<dbReference type="InterPro" id="IPR056740">
    <property type="entry name" value="ILV_EDD_C"/>
</dbReference>
<dbReference type="InterPro" id="IPR000581">
    <property type="entry name" value="ILV_EDD_N"/>
</dbReference>
<dbReference type="InterPro" id="IPR037237">
    <property type="entry name" value="IlvD/EDD_N"/>
</dbReference>
<dbReference type="NCBIfam" id="TIGR00110">
    <property type="entry name" value="ilvD"/>
    <property type="match status" value="1"/>
</dbReference>
<dbReference type="NCBIfam" id="NF009103">
    <property type="entry name" value="PRK12448.1"/>
    <property type="match status" value="1"/>
</dbReference>
<dbReference type="PANTHER" id="PTHR43661">
    <property type="entry name" value="D-XYLONATE DEHYDRATASE"/>
    <property type="match status" value="1"/>
</dbReference>
<dbReference type="PANTHER" id="PTHR43661:SF3">
    <property type="entry name" value="D-XYLONATE DEHYDRATASE YAGF-RELATED"/>
    <property type="match status" value="1"/>
</dbReference>
<dbReference type="Pfam" id="PF24877">
    <property type="entry name" value="ILV_EDD_C"/>
    <property type="match status" value="1"/>
</dbReference>
<dbReference type="Pfam" id="PF00920">
    <property type="entry name" value="ILVD_EDD_N"/>
    <property type="match status" value="1"/>
</dbReference>
<dbReference type="SUPFAM" id="SSF143975">
    <property type="entry name" value="IlvD/EDD N-terminal domain-like"/>
    <property type="match status" value="1"/>
</dbReference>
<dbReference type="SUPFAM" id="SSF52016">
    <property type="entry name" value="LeuD/IlvD-like"/>
    <property type="match status" value="1"/>
</dbReference>
<dbReference type="PROSITE" id="PS00886">
    <property type="entry name" value="ILVD_EDD_1"/>
    <property type="match status" value="1"/>
</dbReference>
<dbReference type="PROSITE" id="PS00887">
    <property type="entry name" value="ILVD_EDD_2"/>
    <property type="match status" value="1"/>
</dbReference>
<reference key="1">
    <citation type="journal article" date="2005" name="Genome Res.">
        <title>Genome sequence of Blochmannia pennsylvanicus indicates parallel evolutionary trends among bacterial mutualists of insects.</title>
        <authorList>
            <person name="Degnan P.H."/>
            <person name="Lazarus A.B."/>
            <person name="Wernegreen J.J."/>
        </authorList>
    </citation>
    <scope>NUCLEOTIDE SEQUENCE [LARGE SCALE GENOMIC DNA]</scope>
    <source>
        <strain>BPEN</strain>
    </source>
</reference>
<accession>Q491Z0</accession>
<feature type="chain" id="PRO_0000225374" description="Dihydroxy-acid dehydratase">
    <location>
        <begin position="1"/>
        <end position="616"/>
    </location>
</feature>
<feature type="active site" description="Proton acceptor" evidence="1">
    <location>
        <position position="517"/>
    </location>
</feature>
<feature type="binding site" evidence="1">
    <location>
        <position position="81"/>
    </location>
    <ligand>
        <name>Mg(2+)</name>
        <dbReference type="ChEBI" id="CHEBI:18420"/>
    </ligand>
</feature>
<feature type="binding site" evidence="1">
    <location>
        <position position="122"/>
    </location>
    <ligand>
        <name>[2Fe-2S] cluster</name>
        <dbReference type="ChEBI" id="CHEBI:190135"/>
    </ligand>
</feature>
<feature type="binding site" evidence="1">
    <location>
        <position position="123"/>
    </location>
    <ligand>
        <name>Mg(2+)</name>
        <dbReference type="ChEBI" id="CHEBI:18420"/>
    </ligand>
</feature>
<feature type="binding site" description="via carbamate group" evidence="1">
    <location>
        <position position="124"/>
    </location>
    <ligand>
        <name>Mg(2+)</name>
        <dbReference type="ChEBI" id="CHEBI:18420"/>
    </ligand>
</feature>
<feature type="binding site" evidence="1">
    <location>
        <position position="195"/>
    </location>
    <ligand>
        <name>[2Fe-2S] cluster</name>
        <dbReference type="ChEBI" id="CHEBI:190135"/>
    </ligand>
</feature>
<feature type="binding site" evidence="1">
    <location>
        <position position="491"/>
    </location>
    <ligand>
        <name>Mg(2+)</name>
        <dbReference type="ChEBI" id="CHEBI:18420"/>
    </ligand>
</feature>
<feature type="modified residue" description="N6-carboxylysine" evidence="1">
    <location>
        <position position="124"/>
    </location>
</feature>
<keyword id="KW-0001">2Fe-2S</keyword>
<keyword id="KW-0028">Amino-acid biosynthesis</keyword>
<keyword id="KW-0100">Branched-chain amino acid biosynthesis</keyword>
<keyword id="KW-0408">Iron</keyword>
<keyword id="KW-0411">Iron-sulfur</keyword>
<keyword id="KW-0456">Lyase</keyword>
<keyword id="KW-0460">Magnesium</keyword>
<keyword id="KW-0479">Metal-binding</keyword>
<keyword id="KW-1185">Reference proteome</keyword>
<organism>
    <name type="scientific">Blochmanniella pennsylvanica (strain BPEN)</name>
    <dbReference type="NCBI Taxonomy" id="291272"/>
    <lineage>
        <taxon>Bacteria</taxon>
        <taxon>Pseudomonadati</taxon>
        <taxon>Pseudomonadota</taxon>
        <taxon>Gammaproteobacteria</taxon>
        <taxon>Enterobacterales</taxon>
        <taxon>Enterobacteriaceae</taxon>
        <taxon>ant endosymbionts</taxon>
        <taxon>Candidatus Blochmanniella</taxon>
    </lineage>
</organism>
<proteinExistence type="inferred from homology"/>
<comment type="function">
    <text evidence="1">Functions in the biosynthesis of branched-chain amino acids. Catalyzes the dehydration of (2R,3R)-2,3-dihydroxy-3-methylpentanoate (2,3-dihydroxy-3-methylvalerate) into 2-oxo-3-methylpentanoate (2-oxo-3-methylvalerate) and of (2R)-2,3-dihydroxy-3-methylbutanoate (2,3-dihydroxyisovalerate) into 2-oxo-3-methylbutanoate (2-oxoisovalerate), the penultimate precursor to L-isoleucine and L-valine, respectively.</text>
</comment>
<comment type="catalytic activity">
    <reaction evidence="1">
        <text>(2R)-2,3-dihydroxy-3-methylbutanoate = 3-methyl-2-oxobutanoate + H2O</text>
        <dbReference type="Rhea" id="RHEA:24809"/>
        <dbReference type="ChEBI" id="CHEBI:11851"/>
        <dbReference type="ChEBI" id="CHEBI:15377"/>
        <dbReference type="ChEBI" id="CHEBI:49072"/>
        <dbReference type="EC" id="4.2.1.9"/>
    </reaction>
    <physiologicalReaction direction="left-to-right" evidence="1">
        <dbReference type="Rhea" id="RHEA:24810"/>
    </physiologicalReaction>
</comment>
<comment type="catalytic activity">
    <reaction evidence="1">
        <text>(2R,3R)-2,3-dihydroxy-3-methylpentanoate = (S)-3-methyl-2-oxopentanoate + H2O</text>
        <dbReference type="Rhea" id="RHEA:27694"/>
        <dbReference type="ChEBI" id="CHEBI:15377"/>
        <dbReference type="ChEBI" id="CHEBI:35146"/>
        <dbReference type="ChEBI" id="CHEBI:49258"/>
        <dbReference type="EC" id="4.2.1.9"/>
    </reaction>
    <physiologicalReaction direction="left-to-right" evidence="1">
        <dbReference type="Rhea" id="RHEA:27695"/>
    </physiologicalReaction>
</comment>
<comment type="cofactor">
    <cofactor evidence="1">
        <name>[2Fe-2S] cluster</name>
        <dbReference type="ChEBI" id="CHEBI:190135"/>
    </cofactor>
    <text evidence="1">Binds 1 [2Fe-2S] cluster per subunit. This cluster acts as a Lewis acid cofactor.</text>
</comment>
<comment type="cofactor">
    <cofactor evidence="1">
        <name>Mg(2+)</name>
        <dbReference type="ChEBI" id="CHEBI:18420"/>
    </cofactor>
</comment>
<comment type="pathway">
    <text evidence="1">Amino-acid biosynthesis; L-isoleucine biosynthesis; L-isoleucine from 2-oxobutanoate: step 3/4.</text>
</comment>
<comment type="pathway">
    <text evidence="1">Amino-acid biosynthesis; L-valine biosynthesis; L-valine from pyruvate: step 3/4.</text>
</comment>
<comment type="subunit">
    <text evidence="1">Homodimer.</text>
</comment>
<comment type="similarity">
    <text evidence="1">Belongs to the IlvD/Edd family.</text>
</comment>
<sequence>MPKYRSITTTHGRNMTGARALWRATGMTTEDFDKMIIAVVNSFTQFVPGHIHLRNVGALVSEQINITGGVAKEFNTIAIDDGIAMGHSGMLYSLPSRDLIADSVEYMINAHCVDAMVCISNCDKITPGMLMAALRLNIPAIFVSGGPMESGAITLSNQNVKLNLIDAITCSVDPNISDVDQQRIESAACPTCGSCSGMFTANSMNCLTEALGLAQPGNGSLLATHSDRKKLFLNAGKYIVHLAKSYYEENNYSVLPRNIANKSSFENAMMLDIAMGGSTNTVLHLLAAAQEGEIDFTMADIDKLSRKVPHLCKVAPNTQRYHMEDFHRAGGVMGVLGELHRCGLLHEDTRNILNKSLLETLLNYDIFSCDNFESKNMYAAAPAGIRSTQAFIQKNRWTSLDTDRRSGCIRSREHAYSQDGGLAVLYGNLAVDGCLVKTAGVHINLQKFSGPAKVYESQEESVQAILTGNIHSGDVIVIRYEGPKGGPGMQEMLYPTSFLKSMGLDLCCALITDGRFSGGTSGLSIGHISPEAANKGLIGLVHDGDIINIDISMRSITLEVSEHILKIRHAAEIARGNKAWTPTNRNRNISISLKAYAHLVTSADKGAVRDKSKLLG</sequence>
<evidence type="ECO:0000255" key="1">
    <source>
        <dbReference type="HAMAP-Rule" id="MF_00012"/>
    </source>
</evidence>
<gene>
    <name evidence="1" type="primary">ilvD</name>
    <name type="ordered locus">BPEN_611</name>
</gene>
<protein>
    <recommendedName>
        <fullName evidence="1">Dihydroxy-acid dehydratase</fullName>
        <shortName evidence="1">DAD</shortName>
        <ecNumber evidence="1">4.2.1.9</ecNumber>
    </recommendedName>
</protein>
<name>ILVD_BLOPB</name>